<proteinExistence type="inferred from homology"/>
<keyword id="KW-0472">Membrane</keyword>
<keyword id="KW-1185">Reference proteome</keyword>
<keyword id="KW-0762">Sugar transport</keyword>
<keyword id="KW-0812">Transmembrane</keyword>
<keyword id="KW-1133">Transmembrane helix</keyword>
<keyword id="KW-0813">Transport</keyword>
<gene>
    <name type="ORF">DDB_G0278631</name>
</gene>
<reference key="1">
    <citation type="journal article" date="2005" name="Nature">
        <title>The genome of the social amoeba Dictyostelium discoideum.</title>
        <authorList>
            <person name="Eichinger L."/>
            <person name="Pachebat J.A."/>
            <person name="Gloeckner G."/>
            <person name="Rajandream M.A."/>
            <person name="Sucgang R."/>
            <person name="Berriman M."/>
            <person name="Song J."/>
            <person name="Olsen R."/>
            <person name="Szafranski K."/>
            <person name="Xu Q."/>
            <person name="Tunggal B."/>
            <person name="Kummerfeld S."/>
            <person name="Madera M."/>
            <person name="Konfortov B.A."/>
            <person name="Rivero F."/>
            <person name="Bankier A.T."/>
            <person name="Lehmann R."/>
            <person name="Hamlin N."/>
            <person name="Davies R."/>
            <person name="Gaudet P."/>
            <person name="Fey P."/>
            <person name="Pilcher K."/>
            <person name="Chen G."/>
            <person name="Saunders D."/>
            <person name="Sodergren E.J."/>
            <person name="Davis P."/>
            <person name="Kerhornou A."/>
            <person name="Nie X."/>
            <person name="Hall N."/>
            <person name="Anjard C."/>
            <person name="Hemphill L."/>
            <person name="Bason N."/>
            <person name="Farbrother P."/>
            <person name="Desany B."/>
            <person name="Just E."/>
            <person name="Morio T."/>
            <person name="Rost R."/>
            <person name="Churcher C.M."/>
            <person name="Cooper J."/>
            <person name="Haydock S."/>
            <person name="van Driessche N."/>
            <person name="Cronin A."/>
            <person name="Goodhead I."/>
            <person name="Muzny D.M."/>
            <person name="Mourier T."/>
            <person name="Pain A."/>
            <person name="Lu M."/>
            <person name="Harper D."/>
            <person name="Lindsay R."/>
            <person name="Hauser H."/>
            <person name="James K.D."/>
            <person name="Quiles M."/>
            <person name="Madan Babu M."/>
            <person name="Saito T."/>
            <person name="Buchrieser C."/>
            <person name="Wardroper A."/>
            <person name="Felder M."/>
            <person name="Thangavelu M."/>
            <person name="Johnson D."/>
            <person name="Knights A."/>
            <person name="Loulseged H."/>
            <person name="Mungall K.L."/>
            <person name="Oliver K."/>
            <person name="Price C."/>
            <person name="Quail M.A."/>
            <person name="Urushihara H."/>
            <person name="Hernandez J."/>
            <person name="Rabbinowitsch E."/>
            <person name="Steffen D."/>
            <person name="Sanders M."/>
            <person name="Ma J."/>
            <person name="Kohara Y."/>
            <person name="Sharp S."/>
            <person name="Simmonds M.N."/>
            <person name="Spiegler S."/>
            <person name="Tivey A."/>
            <person name="Sugano S."/>
            <person name="White B."/>
            <person name="Walker D."/>
            <person name="Woodward J.R."/>
            <person name="Winckler T."/>
            <person name="Tanaka Y."/>
            <person name="Shaulsky G."/>
            <person name="Schleicher M."/>
            <person name="Weinstock G.M."/>
            <person name="Rosenthal A."/>
            <person name="Cox E.C."/>
            <person name="Chisholm R.L."/>
            <person name="Gibbs R.A."/>
            <person name="Loomis W.F."/>
            <person name="Platzer M."/>
            <person name="Kay R.R."/>
            <person name="Williams J.G."/>
            <person name="Dear P.H."/>
            <person name="Noegel A.A."/>
            <person name="Barrell B.G."/>
            <person name="Kuspa A."/>
        </authorList>
    </citation>
    <scope>NUCLEOTIDE SEQUENCE [LARGE SCALE GENOMIC DNA]</scope>
    <source>
        <strain>AX4</strain>
    </source>
</reference>
<organism>
    <name type="scientific">Dictyostelium discoideum</name>
    <name type="common">Social amoeba</name>
    <dbReference type="NCBI Taxonomy" id="44689"/>
    <lineage>
        <taxon>Eukaryota</taxon>
        <taxon>Amoebozoa</taxon>
        <taxon>Evosea</taxon>
        <taxon>Eumycetozoa</taxon>
        <taxon>Dictyostelia</taxon>
        <taxon>Dictyosteliales</taxon>
        <taxon>Dictyosteliaceae</taxon>
        <taxon>Dictyostelium</taxon>
    </lineage>
</organism>
<evidence type="ECO:0000250" key="1"/>
<evidence type="ECO:0000255" key="2"/>
<evidence type="ECO:0000305" key="3"/>
<accession>Q54YK1</accession>
<name>Y8631_DICDI</name>
<feature type="chain" id="PRO_0000376851" description="Putative UDP-sugar transporter DDB_G0278631">
    <location>
        <begin position="1"/>
        <end position="382"/>
    </location>
</feature>
<feature type="transmembrane region" description="Helical" evidence="2">
    <location>
        <begin position="117"/>
        <end position="137"/>
    </location>
</feature>
<feature type="transmembrane region" description="Helical" evidence="2">
    <location>
        <begin position="183"/>
        <end position="203"/>
    </location>
</feature>
<feature type="transmembrane region" description="Helical" evidence="2">
    <location>
        <begin position="211"/>
        <end position="231"/>
    </location>
</feature>
<feature type="transmembrane region" description="Helical" evidence="2">
    <location>
        <begin position="234"/>
        <end position="254"/>
    </location>
</feature>
<feature type="transmembrane region" description="Helical" evidence="2">
    <location>
        <begin position="264"/>
        <end position="284"/>
    </location>
</feature>
<feature type="transmembrane region" description="Helical" evidence="2">
    <location>
        <begin position="302"/>
        <end position="322"/>
    </location>
</feature>
<feature type="transmembrane region" description="Helical" evidence="2">
    <location>
        <begin position="354"/>
        <end position="374"/>
    </location>
</feature>
<comment type="function">
    <text evidence="1">May be nvolved in the import of UDP-sugars.</text>
</comment>
<comment type="subcellular location">
    <subcellularLocation>
        <location evidence="3">Membrane</location>
        <topology evidence="3">Multi-pass membrane protein</topology>
    </subcellularLocation>
</comment>
<comment type="similarity">
    <text evidence="3">Belongs to the TPT transporter family. SLC35D subfamily.</text>
</comment>
<sequence>MKLKPNDIYIPLNSIQFKIHHNDINIKYDTEEDNNNNNNNNNNNRYIDDNEKMKISEDESIFKSINNDNKNQQNDNIINSFNRGSNSFLFNIINFYKSPRFLSGGAVLLYVMTTYDFSASNFLLFNQMVVTIVILHILKHFNILKINTNFEKETIKKLMPLSFCYIINVLLGLDSLKQLNIPMYSALKRLVAVVILVMEYFILKKVSPPKIIASVVVMVIGAVVAGITDLSFNSLGYSLVLLSCIFQASYLIYVKKVASNMSTYDMLYYNSVLSLPITIFLMIVNQEIEYFQTFEHLYDSSFQAYFILSIFLGFFLNFCIFFCTSVNSPLTTSVTGQVKNIASTIIGAMVFNDIIIHPINILGLIINIIGSIWYSFLKLTSK</sequence>
<protein>
    <recommendedName>
        <fullName>Putative UDP-sugar transporter DDB_G0278631</fullName>
    </recommendedName>
</protein>
<dbReference type="EMBL" id="AAFI02000023">
    <property type="protein sequence ID" value="EAL68488.2"/>
    <property type="molecule type" value="Genomic_DNA"/>
</dbReference>
<dbReference type="RefSeq" id="XP_642201.2">
    <property type="nucleotide sequence ID" value="XM_637109.2"/>
</dbReference>
<dbReference type="SMR" id="Q54YK1"/>
<dbReference type="FunCoup" id="Q54YK1">
    <property type="interactions" value="169"/>
</dbReference>
<dbReference type="STRING" id="44689.Q54YK1"/>
<dbReference type="PaxDb" id="44689-DDB0252849"/>
<dbReference type="EnsemblProtists" id="EAL68488">
    <property type="protein sequence ID" value="EAL68488"/>
    <property type="gene ID" value="DDB_G0278631"/>
</dbReference>
<dbReference type="GeneID" id="8621408"/>
<dbReference type="KEGG" id="ddi:DDB_G0278631"/>
<dbReference type="dictyBase" id="DDB_G0278631"/>
<dbReference type="VEuPathDB" id="AmoebaDB:DDB_G0278631"/>
<dbReference type="eggNOG" id="KOG1444">
    <property type="taxonomic scope" value="Eukaryota"/>
</dbReference>
<dbReference type="HOGENOM" id="CLU_724471_0_0_1"/>
<dbReference type="InParanoid" id="Q54YK1"/>
<dbReference type="OMA" id="ERTINFP"/>
<dbReference type="PhylomeDB" id="Q54YK1"/>
<dbReference type="PRO" id="PR:Q54YK1"/>
<dbReference type="Proteomes" id="UP000002195">
    <property type="component" value="Chromosome 3"/>
</dbReference>
<dbReference type="GO" id="GO:0005794">
    <property type="term" value="C:Golgi apparatus"/>
    <property type="evidence" value="ECO:0000318"/>
    <property type="project" value="GO_Central"/>
</dbReference>
<dbReference type="GO" id="GO:0016020">
    <property type="term" value="C:membrane"/>
    <property type="evidence" value="ECO:0007669"/>
    <property type="project" value="UniProtKB-SubCell"/>
</dbReference>
<dbReference type="GO" id="GO:0015297">
    <property type="term" value="F:antiporter activity"/>
    <property type="evidence" value="ECO:0000318"/>
    <property type="project" value="GO_Central"/>
</dbReference>
<dbReference type="GO" id="GO:0055085">
    <property type="term" value="P:transmembrane transport"/>
    <property type="evidence" value="ECO:0000318"/>
    <property type="project" value="GO_Central"/>
</dbReference>
<dbReference type="InterPro" id="IPR004853">
    <property type="entry name" value="Sugar_P_trans_dom"/>
</dbReference>
<dbReference type="InterPro" id="IPR050186">
    <property type="entry name" value="TPT_transporter"/>
</dbReference>
<dbReference type="PANTHER" id="PTHR11132">
    <property type="entry name" value="SOLUTE CARRIER FAMILY 35"/>
    <property type="match status" value="1"/>
</dbReference>
<dbReference type="Pfam" id="PF03151">
    <property type="entry name" value="TPT"/>
    <property type="match status" value="1"/>
</dbReference>